<feature type="chain" id="PRO_0000149086" description="Galactoside alpha-(1,2)-fucosyltransferase 1">
    <location>
        <begin position="1"/>
        <end position="366"/>
    </location>
</feature>
<feature type="topological domain" description="Cytoplasmic" evidence="4">
    <location>
        <begin position="1"/>
        <end position="8"/>
    </location>
</feature>
<feature type="transmembrane region" description="Helical; Signal-anchor for type II membrane protein" evidence="4">
    <location>
        <begin position="9"/>
        <end position="25"/>
    </location>
</feature>
<feature type="topological domain" description="Lumenal" evidence="4">
    <location>
        <begin position="26"/>
        <end position="366"/>
    </location>
</feature>
<feature type="glycosylation site" description="N-linked (GlcNAc...) asparagine" evidence="4">
    <location>
        <position position="66"/>
    </location>
</feature>
<feature type="glycosylation site" description="N-linked (GlcNAc...) asparagine" evidence="4">
    <location>
        <position position="302"/>
    </location>
</feature>
<feature type="glycosylation site" description="N-linked (GlcNAc...) asparagine" evidence="4">
    <location>
        <position position="328"/>
    </location>
</feature>
<name>FUT1_ALOBE</name>
<dbReference type="EC" id="2.4.1.69" evidence="2"/>
<dbReference type="EC" id="2.4.1.344" evidence="3"/>
<dbReference type="EMBL" id="AY219627">
    <property type="protein sequence ID" value="AAO43069.1"/>
    <property type="molecule type" value="Genomic_DNA"/>
</dbReference>
<dbReference type="SMR" id="Q866E1"/>
<dbReference type="CAZy" id="GT11">
    <property type="family name" value="Glycosyltransferase Family 11"/>
</dbReference>
<dbReference type="GlyCosmos" id="Q866E1">
    <property type="glycosylation" value="3 sites, No reported glycans"/>
</dbReference>
<dbReference type="UniPathway" id="UPA00378"/>
<dbReference type="GO" id="GO:0032580">
    <property type="term" value="C:Golgi cisterna membrane"/>
    <property type="evidence" value="ECO:0007669"/>
    <property type="project" value="UniProtKB-SubCell"/>
</dbReference>
<dbReference type="GO" id="GO:0031127">
    <property type="term" value="F:alpha-(1,2)-fucosyltransferase activity"/>
    <property type="evidence" value="ECO:0000250"/>
    <property type="project" value="UniProtKB"/>
</dbReference>
<dbReference type="GO" id="GO:0008107">
    <property type="term" value="F:galactoside 2-alpha-L-fucosyltransferase activity"/>
    <property type="evidence" value="ECO:0007669"/>
    <property type="project" value="UniProtKB-EC"/>
</dbReference>
<dbReference type="GO" id="GO:0005975">
    <property type="term" value="P:carbohydrate metabolic process"/>
    <property type="evidence" value="ECO:0007669"/>
    <property type="project" value="InterPro"/>
</dbReference>
<dbReference type="GO" id="GO:0036065">
    <property type="term" value="P:fucosylation"/>
    <property type="evidence" value="ECO:0000250"/>
    <property type="project" value="UniProtKB"/>
</dbReference>
<dbReference type="GO" id="GO:0006629">
    <property type="term" value="P:lipid metabolic process"/>
    <property type="evidence" value="ECO:0007669"/>
    <property type="project" value="UniProtKB-KW"/>
</dbReference>
<dbReference type="GO" id="GO:0021772">
    <property type="term" value="P:olfactory bulb development"/>
    <property type="evidence" value="ECO:0000250"/>
    <property type="project" value="UniProtKB"/>
</dbReference>
<dbReference type="GO" id="GO:0001954">
    <property type="term" value="P:positive regulation of cell-matrix adhesion"/>
    <property type="evidence" value="ECO:0000250"/>
    <property type="project" value="UniProtKB"/>
</dbReference>
<dbReference type="GO" id="GO:0010595">
    <property type="term" value="P:positive regulation of endothelial cell migration"/>
    <property type="evidence" value="ECO:0000250"/>
    <property type="project" value="UniProtKB"/>
</dbReference>
<dbReference type="GO" id="GO:1904906">
    <property type="term" value="P:positive regulation of endothelial cell-matrix adhesion via fibronectin"/>
    <property type="evidence" value="ECO:0000250"/>
    <property type="project" value="UniProtKB"/>
</dbReference>
<dbReference type="GO" id="GO:1903672">
    <property type="term" value="P:positive regulation of sprouting angiogenesis"/>
    <property type="evidence" value="ECO:0000250"/>
    <property type="project" value="UniProtKB"/>
</dbReference>
<dbReference type="GO" id="GO:0006486">
    <property type="term" value="P:protein glycosylation"/>
    <property type="evidence" value="ECO:0000250"/>
    <property type="project" value="UniProtKB"/>
</dbReference>
<dbReference type="GO" id="GO:0030155">
    <property type="term" value="P:regulation of cell adhesion"/>
    <property type="evidence" value="ECO:0000250"/>
    <property type="project" value="UniProtKB"/>
</dbReference>
<dbReference type="GO" id="GO:0001936">
    <property type="term" value="P:regulation of endothelial cell proliferation"/>
    <property type="evidence" value="ECO:0000250"/>
    <property type="project" value="UniProtKB"/>
</dbReference>
<dbReference type="CDD" id="cd11301">
    <property type="entry name" value="Fut1_Fut2_like"/>
    <property type="match status" value="1"/>
</dbReference>
<dbReference type="InterPro" id="IPR002516">
    <property type="entry name" value="Glyco_trans_11"/>
</dbReference>
<dbReference type="PANTHER" id="PTHR11927">
    <property type="entry name" value="GALACTOSIDE 2-L-FUCOSYLTRANSFERASE"/>
    <property type="match status" value="1"/>
</dbReference>
<dbReference type="PANTHER" id="PTHR11927:SF4">
    <property type="entry name" value="GALACTOSIDE ALPHA-(1,2)-FUCOSYLTRANSFERASE 1"/>
    <property type="match status" value="1"/>
</dbReference>
<dbReference type="Pfam" id="PF01531">
    <property type="entry name" value="Glyco_transf_11"/>
    <property type="match status" value="1"/>
</dbReference>
<organism>
    <name type="scientific">Alouatta belzebul</name>
    <name type="common">Red-handed howler monkey</name>
    <dbReference type="NCBI Taxonomy" id="30590"/>
    <lineage>
        <taxon>Eukaryota</taxon>
        <taxon>Metazoa</taxon>
        <taxon>Chordata</taxon>
        <taxon>Craniata</taxon>
        <taxon>Vertebrata</taxon>
        <taxon>Euteleostomi</taxon>
        <taxon>Mammalia</taxon>
        <taxon>Eutheria</taxon>
        <taxon>Euarchontoglires</taxon>
        <taxon>Primates</taxon>
        <taxon>Haplorrhini</taxon>
        <taxon>Platyrrhini</taxon>
        <taxon>Atelidae</taxon>
        <taxon>Alouattinae</taxon>
        <taxon>Alouatta</taxon>
    </lineage>
</organism>
<evidence type="ECO:0000250" key="1">
    <source>
        <dbReference type="UniProtKB" id="F6Q1T7"/>
    </source>
</evidence>
<evidence type="ECO:0000250" key="2">
    <source>
        <dbReference type="UniProtKB" id="O09160"/>
    </source>
</evidence>
<evidence type="ECO:0000250" key="3">
    <source>
        <dbReference type="UniProtKB" id="P19526"/>
    </source>
</evidence>
<evidence type="ECO:0000255" key="4"/>
<evidence type="ECO:0000305" key="5"/>
<sequence length="366" mass="41653">MWPLSHRHLCLAFLLVCVLSAISFFLHVHQDSFRHGLGLSLLCPDRRLVTHPVAIFCLPGTPMSPNTSSPCPQHPASLSGTWTIYPDGRFGNQMGQYATLLALAQLNARQAFILPAMHAALAPVFRITLPVLAPEVDSHTPWRELRLHDWMSEEYADLEDPFLKLSGFPCSWTFFHHLREQIRSEFTLHDHLREEAQSVLRRLRLGRPWDRPRTFVGVHVRRGDYLQVMPQRWKGVVGNSAYLREAMDWFRARHEAPVFVVTSNGMEWCRENIDTSKGDVMFAGDGQEASPWKDFALLTQCNHTIMTIGTFGFWAAYLAGGDTVYLANFTLPDSEFLKIFKPEAAFLPEWVGINADLSPLWTLAEP</sequence>
<reference key="1">
    <citation type="submission" date="2003-01" db="EMBL/GenBank/DDBJ databases">
        <title>Molecular evolution of the H (FUT1) gene in New World monkeys (Primates, Platyrrhini): evidence of divergent evolution and purifying selection.</title>
        <authorList>
            <person name="Borges B.N."/>
            <person name="Harada M.L."/>
        </authorList>
    </citation>
    <scope>NUCLEOTIDE SEQUENCE [GENOMIC DNA]</scope>
</reference>
<keyword id="KW-0325">Glycoprotein</keyword>
<keyword id="KW-0328">Glycosyltransferase</keyword>
<keyword id="KW-0333">Golgi apparatus</keyword>
<keyword id="KW-0443">Lipid metabolism</keyword>
<keyword id="KW-0472">Membrane</keyword>
<keyword id="KW-0735">Signal-anchor</keyword>
<keyword id="KW-0808">Transferase</keyword>
<keyword id="KW-0812">Transmembrane</keyword>
<keyword id="KW-1133">Transmembrane helix</keyword>
<comment type="function">
    <text evidence="2 3">Catalyzes the transfer of L-fucose, from a guanosine diphosphate-beta-L-fucose, to the terminal galactose residue of glycoconjugates through an alpha(1,2) linkage leading to H antigen synthesis that is an intermediate substrate in the synthesis of ABO blood group antigens. H antigen is essential for maturation of the glomerular layer of the main olfactory bulb, in cell migration and early cell-cell contacts during tumor associated angiogenesis (By similarity). Preferentially fucosylates soluble lactose and to a lesser extent fucosylates glycolipids gangliosides GA1 and GM1a (By similarity).</text>
</comment>
<comment type="catalytic activity">
    <reaction evidence="3">
        <text>a beta-D-galactosyl-(1-&gt;4)-N-acetyl-beta-D-glucosaminyl derivative + GDP-beta-L-fucose = an alpha-L-Fuc-(1-&gt;2)-beta-D-Gal-(1-&gt;4)-beta-D-GlcNAc derivative + GDP + H(+)</text>
        <dbReference type="Rhea" id="RHEA:50668"/>
        <dbReference type="ChEBI" id="CHEBI:15378"/>
        <dbReference type="ChEBI" id="CHEBI:57273"/>
        <dbReference type="ChEBI" id="CHEBI:58189"/>
        <dbReference type="ChEBI" id="CHEBI:133507"/>
        <dbReference type="ChEBI" id="CHEBI:133510"/>
        <dbReference type="EC" id="2.4.1.344"/>
    </reaction>
</comment>
<comment type="catalytic activity">
    <reaction evidence="2">
        <text>a ganglioside GA1 + GDP-beta-L-fucose = a ganglioside Fuc-GA1 + GDP + H(+)</text>
        <dbReference type="Rhea" id="RHEA:48320"/>
        <dbReference type="ChEBI" id="CHEBI:15378"/>
        <dbReference type="ChEBI" id="CHEBI:57273"/>
        <dbReference type="ChEBI" id="CHEBI:58189"/>
        <dbReference type="ChEBI" id="CHEBI:88069"/>
        <dbReference type="ChEBI" id="CHEBI:90262"/>
    </reaction>
    <physiologicalReaction direction="left-to-right" evidence="2">
        <dbReference type="Rhea" id="RHEA:48321"/>
    </physiologicalReaction>
</comment>
<comment type="catalytic activity">
    <reaction evidence="2">
        <text>a beta-D-Gal-(1-&gt;3)-beta-D-GlcNAc-(1-&gt;3)-beta-D-Gal-(1-&gt;4)-beta-D-Glc-(1&lt;-&gt;1')-Cer(d18:1(4E)) + GDP-beta-L-fucose = alpha-L-fucosyl-(1-&gt;2)- beta-D-galactosyl-(1-&gt;3)-N-acetyl-beta-D-glucosaminyl-(1-&gt;3)-beta-D-galactosyl-(1-&gt;4)-beta-D-glucosyl-(1&lt;-&gt;1')-N-acylsphing-4-enine + GDP + H(+)</text>
        <dbReference type="Rhea" id="RHEA:32175"/>
        <dbReference type="ChEBI" id="CHEBI:15378"/>
        <dbReference type="ChEBI" id="CHEBI:17292"/>
        <dbReference type="ChEBI" id="CHEBI:28743"/>
        <dbReference type="ChEBI" id="CHEBI:57273"/>
        <dbReference type="ChEBI" id="CHEBI:58189"/>
        <dbReference type="EC" id="2.4.1.69"/>
    </reaction>
    <physiologicalReaction direction="left-to-right" evidence="2">
        <dbReference type="Rhea" id="RHEA:32176"/>
    </physiologicalReaction>
</comment>
<comment type="catalytic activity">
    <reaction evidence="2">
        <text>a neolactoside nLc4Cer(d18:1(4E)) + GDP-beta-L-fucose = a neolactoside IV(2)-alpha-Fuc-nLc4Cer(d18:1(4E)) + GDP + H(+)</text>
        <dbReference type="Rhea" id="RHEA:48304"/>
        <dbReference type="ChEBI" id="CHEBI:15378"/>
        <dbReference type="ChEBI" id="CHEBI:17006"/>
        <dbReference type="ChEBI" id="CHEBI:28691"/>
        <dbReference type="ChEBI" id="CHEBI:57273"/>
        <dbReference type="ChEBI" id="CHEBI:58189"/>
    </reaction>
    <physiologicalReaction direction="left-to-right" evidence="2">
        <dbReference type="Rhea" id="RHEA:48305"/>
    </physiologicalReaction>
</comment>
<comment type="catalytic activity">
    <reaction evidence="1">
        <text>a ganglioside GM1 + GDP-beta-L-fucose = a ganglioside Fuc-GM1 + GDP + H(+)</text>
        <dbReference type="Rhea" id="RHEA:48292"/>
        <dbReference type="ChEBI" id="CHEBI:15378"/>
        <dbReference type="ChEBI" id="CHEBI:57273"/>
        <dbReference type="ChEBI" id="CHEBI:58189"/>
        <dbReference type="ChEBI" id="CHEBI:82639"/>
        <dbReference type="ChEBI" id="CHEBI:90189"/>
    </reaction>
    <physiologicalReaction direction="left-to-right" evidence="1">
        <dbReference type="Rhea" id="RHEA:48293"/>
    </physiologicalReaction>
</comment>
<comment type="catalytic activity">
    <reaction evidence="1">
        <text>beta-D-galactosyl-(1-&gt;3)-N-acetyl-D-galactosamine + GDP-beta-L-fucose = alpha-L-fucosyl-(1-&gt;2)-beta-D-galactosyl-(1-&gt;3)-N-acetyl-D-galactosamine + GDP + H(+)</text>
        <dbReference type="Rhea" id="RHEA:62964"/>
        <dbReference type="ChEBI" id="CHEBI:15378"/>
        <dbReference type="ChEBI" id="CHEBI:57273"/>
        <dbReference type="ChEBI" id="CHEBI:58189"/>
        <dbReference type="ChEBI" id="CHEBI:84728"/>
        <dbReference type="ChEBI" id="CHEBI:546807"/>
    </reaction>
    <physiologicalReaction direction="left-to-right" evidence="1">
        <dbReference type="Rhea" id="RHEA:62965"/>
    </physiologicalReaction>
</comment>
<comment type="pathway">
    <text evidence="3">Protein modification; protein glycosylation.</text>
</comment>
<comment type="subcellular location">
    <subcellularLocation>
        <location evidence="2">Golgi apparatus</location>
        <location evidence="2">Golgi stack membrane</location>
        <topology evidence="2">Single-pass type II membrane protein</topology>
    </subcellularLocation>
    <text evidence="2">Membrane-bound form in trans cisternae of Golgi.</text>
</comment>
<comment type="similarity">
    <text evidence="5">Belongs to the glycosyltransferase 11 family.</text>
</comment>
<accession>Q866E1</accession>
<gene>
    <name evidence="3" type="primary">FUT1</name>
</gene>
<protein>
    <recommendedName>
        <fullName evidence="3">Galactoside alpha-(1,2)-fucosyltransferase 1</fullName>
    </recommendedName>
    <alternativeName>
        <fullName>Alpha(1,2)FT 1</fullName>
    </alternativeName>
    <alternativeName>
        <fullName>Fucosyltransferase 1</fullName>
    </alternativeName>
    <alternativeName>
        <fullName>GDP-L-fucose:beta-D-galactoside 2-alpha-L-fucosyltransferase 1</fullName>
    </alternativeName>
    <alternativeName>
        <fullName evidence="2">Type 1 galactoside alpha-(1,2)-fucosyltransferase FUT1</fullName>
        <ecNumber evidence="2">2.4.1.69</ecNumber>
    </alternativeName>
    <alternativeName>
        <fullName evidence="3">Type 2 galactoside alpha-(1,2)-fucosyltransferase FUT1</fullName>
        <ecNumber evidence="3">2.4.1.344</ecNumber>
    </alternativeName>
</protein>
<proteinExistence type="inferred from homology"/>